<name>LEDL3_DROME</name>
<proteinExistence type="evidence at transcript level"/>
<organism evidence="11">
    <name type="scientific">Drosophila melanogaster</name>
    <name type="common">Fruit fly</name>
    <dbReference type="NCBI Taxonomy" id="7227"/>
    <lineage>
        <taxon>Eukaryota</taxon>
        <taxon>Metazoa</taxon>
        <taxon>Ecdysozoa</taxon>
        <taxon>Arthropoda</taxon>
        <taxon>Hexapoda</taxon>
        <taxon>Insecta</taxon>
        <taxon>Pterygota</taxon>
        <taxon>Neoptera</taxon>
        <taxon>Endopterygota</taxon>
        <taxon>Diptera</taxon>
        <taxon>Brachycera</taxon>
        <taxon>Muscomorpha</taxon>
        <taxon>Ephydroidea</taxon>
        <taxon>Drosophilidae</taxon>
        <taxon>Drosophila</taxon>
        <taxon>Sophophora</taxon>
    </lineage>
</organism>
<comment type="function">
    <text evidence="4 5">Galactose-specific lectin that displays calcium-dependent activity (PubMed:16475980, PubMed:17287021). Binds to the surface of hemocytes and enhances hemocyte encapsulation and melanization (PubMed:17287021). This is likely by interacting with carbohydrates on the surface of the hemocytes (PubMed:17287021). Also displays agglutination activity against the Gram-negative bacterium E.coli (PubMed:17287021).</text>
</comment>
<comment type="subcellular location">
    <subcellularLocation>
        <location evidence="4">Secreted</location>
    </subcellularLocation>
</comment>
<comment type="developmental stage">
    <text evidence="4">Detected in adults and larvae.</text>
</comment>
<comment type="sequence caution" evidence="7">
    <conflict type="erroneous initiation">
        <sequence resource="EMBL-CDS" id="ACD99547"/>
    </conflict>
    <text>Extended N-terminus.</text>
</comment>
<gene>
    <name evidence="10" type="primary">lectin-37Db</name>
    <name evidence="6" type="synonym">DL3</name>
    <name evidence="10" type="ORF">CG33533</name>
</gene>
<keyword id="KW-0106">Calcium</keyword>
<keyword id="KW-1015">Disulfide bond</keyword>
<keyword id="KW-0325">Glycoprotein</keyword>
<keyword id="KW-0348">Hemagglutinin</keyword>
<keyword id="KW-0430">Lectin</keyword>
<keyword id="KW-0479">Metal-binding</keyword>
<keyword id="KW-1185">Reference proteome</keyword>
<keyword id="KW-0964">Secreted</keyword>
<keyword id="KW-0732">Signal</keyword>
<accession>Q59DY5</accession>
<accession>B3DNJ5</accession>
<accession>Q65Y00</accession>
<feature type="signal peptide" evidence="1">
    <location>
        <begin position="1"/>
        <end position="20"/>
    </location>
</feature>
<feature type="chain" id="PRO_5007209827" description="C-type lectin 37Db">
    <location>
        <begin position="21"/>
        <end position="150"/>
    </location>
</feature>
<feature type="domain" description="C-type lectin" evidence="2">
    <location>
        <begin position="31"/>
        <end position="148"/>
    </location>
</feature>
<feature type="glycosylation site" description="N-linked (GlcNAc...) asparagine" evidence="3">
    <location>
        <position position="107"/>
    </location>
</feature>
<feature type="glycosylation site" description="N-linked (GlcNAc...) asparagine" evidence="3">
    <location>
        <position position="115"/>
    </location>
</feature>
<feature type="disulfide bond" evidence="2">
    <location>
        <begin position="52"/>
        <end position="147"/>
    </location>
</feature>
<feature type="disulfide bond" evidence="2">
    <location>
        <begin position="122"/>
        <end position="139"/>
    </location>
</feature>
<feature type="sequence conflict" description="In Ref. 1; BAD51434." evidence="7" ref="1">
    <original>L</original>
    <variation>V</variation>
    <location>
        <position position="101"/>
    </location>
</feature>
<sequence length="150" mass="17053">MMVKLLLLFLVCWSALPLESSPLGNRYNLEIGEKQYYISLAKTNWFEASNHCRQNGGFLLNLESREELELLSPHLHPAYSYWLSINDLGERGVYVSEATGLEAPFLNWSAGEPDNSSGYDRCVELWLSTTSFQMNDLPCYSSVAFICQLN</sequence>
<evidence type="ECO:0000255" key="1"/>
<evidence type="ECO:0000255" key="2">
    <source>
        <dbReference type="PROSITE-ProRule" id="PRU00040"/>
    </source>
</evidence>
<evidence type="ECO:0000255" key="3">
    <source>
        <dbReference type="PROSITE-ProRule" id="PRU00498"/>
    </source>
</evidence>
<evidence type="ECO:0000269" key="4">
    <source>
    </source>
</evidence>
<evidence type="ECO:0000269" key="5">
    <source>
    </source>
</evidence>
<evidence type="ECO:0000303" key="6">
    <source>
    </source>
</evidence>
<evidence type="ECO:0000305" key="7"/>
<evidence type="ECO:0000312" key="8">
    <source>
        <dbReference type="EMBL" id="ACD99547.1"/>
    </source>
</evidence>
<evidence type="ECO:0000312" key="9">
    <source>
        <dbReference type="EMBL" id="BAD51434.1"/>
    </source>
</evidence>
<evidence type="ECO:0000312" key="10">
    <source>
        <dbReference type="FlyBase" id="FBgn0053533"/>
    </source>
</evidence>
<evidence type="ECO:0000312" key="11">
    <source>
        <dbReference type="Proteomes" id="UP000000803"/>
    </source>
</evidence>
<reference evidence="9" key="1">
    <citation type="journal article" date="2006" name="Biochem. J.">
        <title>Participation of a galactose-specific C-type lectin in Drosophila immunity.</title>
        <authorList>
            <person name="Tanji T."/>
            <person name="Ohashi-Kobayashi A."/>
            <person name="Natori S."/>
        </authorList>
    </citation>
    <scope>NUCLEOTIDE SEQUENCE [MRNA]</scope>
    <scope>FUNCTION</scope>
    <scope>SUBCELLULAR LOCATION</scope>
    <scope>DEVELOPMENTAL STAGE</scope>
</reference>
<reference evidence="11" key="2">
    <citation type="journal article" date="2000" name="Science">
        <title>The genome sequence of Drosophila melanogaster.</title>
        <authorList>
            <person name="Adams M.D."/>
            <person name="Celniker S.E."/>
            <person name="Holt R.A."/>
            <person name="Evans C.A."/>
            <person name="Gocayne J.D."/>
            <person name="Amanatides P.G."/>
            <person name="Scherer S.E."/>
            <person name="Li P.W."/>
            <person name="Hoskins R.A."/>
            <person name="Galle R.F."/>
            <person name="George R.A."/>
            <person name="Lewis S.E."/>
            <person name="Richards S."/>
            <person name="Ashburner M."/>
            <person name="Henderson S.N."/>
            <person name="Sutton G.G."/>
            <person name="Wortman J.R."/>
            <person name="Yandell M.D."/>
            <person name="Zhang Q."/>
            <person name="Chen L.X."/>
            <person name="Brandon R.C."/>
            <person name="Rogers Y.-H.C."/>
            <person name="Blazej R.G."/>
            <person name="Champe M."/>
            <person name="Pfeiffer B.D."/>
            <person name="Wan K.H."/>
            <person name="Doyle C."/>
            <person name="Baxter E.G."/>
            <person name="Helt G."/>
            <person name="Nelson C.R."/>
            <person name="Miklos G.L.G."/>
            <person name="Abril J.F."/>
            <person name="Agbayani A."/>
            <person name="An H.-J."/>
            <person name="Andrews-Pfannkoch C."/>
            <person name="Baldwin D."/>
            <person name="Ballew R.M."/>
            <person name="Basu A."/>
            <person name="Baxendale J."/>
            <person name="Bayraktaroglu L."/>
            <person name="Beasley E.M."/>
            <person name="Beeson K.Y."/>
            <person name="Benos P.V."/>
            <person name="Berman B.P."/>
            <person name="Bhandari D."/>
            <person name="Bolshakov S."/>
            <person name="Borkova D."/>
            <person name="Botchan M.R."/>
            <person name="Bouck J."/>
            <person name="Brokstein P."/>
            <person name="Brottier P."/>
            <person name="Burtis K.C."/>
            <person name="Busam D.A."/>
            <person name="Butler H."/>
            <person name="Cadieu E."/>
            <person name="Center A."/>
            <person name="Chandra I."/>
            <person name="Cherry J.M."/>
            <person name="Cawley S."/>
            <person name="Dahlke C."/>
            <person name="Davenport L.B."/>
            <person name="Davies P."/>
            <person name="de Pablos B."/>
            <person name="Delcher A."/>
            <person name="Deng Z."/>
            <person name="Mays A.D."/>
            <person name="Dew I."/>
            <person name="Dietz S.M."/>
            <person name="Dodson K."/>
            <person name="Doup L.E."/>
            <person name="Downes M."/>
            <person name="Dugan-Rocha S."/>
            <person name="Dunkov B.C."/>
            <person name="Dunn P."/>
            <person name="Durbin K.J."/>
            <person name="Evangelista C.C."/>
            <person name="Ferraz C."/>
            <person name="Ferriera S."/>
            <person name="Fleischmann W."/>
            <person name="Fosler C."/>
            <person name="Gabrielian A.E."/>
            <person name="Garg N.S."/>
            <person name="Gelbart W.M."/>
            <person name="Glasser K."/>
            <person name="Glodek A."/>
            <person name="Gong F."/>
            <person name="Gorrell J.H."/>
            <person name="Gu Z."/>
            <person name="Guan P."/>
            <person name="Harris M."/>
            <person name="Harris N.L."/>
            <person name="Harvey D.A."/>
            <person name="Heiman T.J."/>
            <person name="Hernandez J.R."/>
            <person name="Houck J."/>
            <person name="Hostin D."/>
            <person name="Houston K.A."/>
            <person name="Howland T.J."/>
            <person name="Wei M.-H."/>
            <person name="Ibegwam C."/>
            <person name="Jalali M."/>
            <person name="Kalush F."/>
            <person name="Karpen G.H."/>
            <person name="Ke Z."/>
            <person name="Kennison J.A."/>
            <person name="Ketchum K.A."/>
            <person name="Kimmel B.E."/>
            <person name="Kodira C.D."/>
            <person name="Kraft C.L."/>
            <person name="Kravitz S."/>
            <person name="Kulp D."/>
            <person name="Lai Z."/>
            <person name="Lasko P."/>
            <person name="Lei Y."/>
            <person name="Levitsky A.A."/>
            <person name="Li J.H."/>
            <person name="Li Z."/>
            <person name="Liang Y."/>
            <person name="Lin X."/>
            <person name="Liu X."/>
            <person name="Mattei B."/>
            <person name="McIntosh T.C."/>
            <person name="McLeod M.P."/>
            <person name="McPherson D."/>
            <person name="Merkulov G."/>
            <person name="Milshina N.V."/>
            <person name="Mobarry C."/>
            <person name="Morris J."/>
            <person name="Moshrefi A."/>
            <person name="Mount S.M."/>
            <person name="Moy M."/>
            <person name="Murphy B."/>
            <person name="Murphy L."/>
            <person name="Muzny D.M."/>
            <person name="Nelson D.L."/>
            <person name="Nelson D.R."/>
            <person name="Nelson K.A."/>
            <person name="Nixon K."/>
            <person name="Nusskern D.R."/>
            <person name="Pacleb J.M."/>
            <person name="Palazzolo M."/>
            <person name="Pittman G.S."/>
            <person name="Pan S."/>
            <person name="Pollard J."/>
            <person name="Puri V."/>
            <person name="Reese M.G."/>
            <person name="Reinert K."/>
            <person name="Remington K."/>
            <person name="Saunders R.D.C."/>
            <person name="Scheeler F."/>
            <person name="Shen H."/>
            <person name="Shue B.C."/>
            <person name="Siden-Kiamos I."/>
            <person name="Simpson M."/>
            <person name="Skupski M.P."/>
            <person name="Smith T.J."/>
            <person name="Spier E."/>
            <person name="Spradling A.C."/>
            <person name="Stapleton M."/>
            <person name="Strong R."/>
            <person name="Sun E."/>
            <person name="Svirskas R."/>
            <person name="Tector C."/>
            <person name="Turner R."/>
            <person name="Venter E."/>
            <person name="Wang A.H."/>
            <person name="Wang X."/>
            <person name="Wang Z.-Y."/>
            <person name="Wassarman D.A."/>
            <person name="Weinstock G.M."/>
            <person name="Weissenbach J."/>
            <person name="Williams S.M."/>
            <person name="Woodage T."/>
            <person name="Worley K.C."/>
            <person name="Wu D."/>
            <person name="Yang S."/>
            <person name="Yao Q.A."/>
            <person name="Ye J."/>
            <person name="Yeh R.-F."/>
            <person name="Zaveri J.S."/>
            <person name="Zhan M."/>
            <person name="Zhang G."/>
            <person name="Zhao Q."/>
            <person name="Zheng L."/>
            <person name="Zheng X.H."/>
            <person name="Zhong F.N."/>
            <person name="Zhong W."/>
            <person name="Zhou X."/>
            <person name="Zhu S.C."/>
            <person name="Zhu X."/>
            <person name="Smith H.O."/>
            <person name="Gibbs R.A."/>
            <person name="Myers E.W."/>
            <person name="Rubin G.M."/>
            <person name="Venter J.C."/>
        </authorList>
    </citation>
    <scope>NUCLEOTIDE SEQUENCE [LARGE SCALE GENOMIC DNA]</scope>
    <source>
        <strain evidence="11">Berkeley</strain>
    </source>
</reference>
<reference evidence="11" key="3">
    <citation type="journal article" date="2002" name="Genome Biol.">
        <title>Annotation of the Drosophila melanogaster euchromatic genome: a systematic review.</title>
        <authorList>
            <person name="Misra S."/>
            <person name="Crosby M.A."/>
            <person name="Mungall C.J."/>
            <person name="Matthews B.B."/>
            <person name="Campbell K.S."/>
            <person name="Hradecky P."/>
            <person name="Huang Y."/>
            <person name="Kaminker J.S."/>
            <person name="Millburn G.H."/>
            <person name="Prochnik S.E."/>
            <person name="Smith C.D."/>
            <person name="Tupy J.L."/>
            <person name="Whitfield E.J."/>
            <person name="Bayraktaroglu L."/>
            <person name="Berman B.P."/>
            <person name="Bettencourt B.R."/>
            <person name="Celniker S.E."/>
            <person name="de Grey A.D.N.J."/>
            <person name="Drysdale R.A."/>
            <person name="Harris N.L."/>
            <person name="Richter J."/>
            <person name="Russo S."/>
            <person name="Schroeder A.J."/>
            <person name="Shu S.Q."/>
            <person name="Stapleton M."/>
            <person name="Yamada C."/>
            <person name="Ashburner M."/>
            <person name="Gelbart W.M."/>
            <person name="Rubin G.M."/>
            <person name="Lewis S.E."/>
        </authorList>
    </citation>
    <scope>GENOME REANNOTATION</scope>
    <source>
        <strain evidence="11">Berkeley</strain>
    </source>
</reference>
<reference evidence="8" key="4">
    <citation type="submission" date="2008-06" db="EMBL/GenBank/DDBJ databases">
        <authorList>
            <person name="Carlson J."/>
            <person name="Booth B."/>
            <person name="Frise E."/>
            <person name="Park S."/>
            <person name="Wan K."/>
            <person name="Yu C."/>
            <person name="Celniker S."/>
        </authorList>
    </citation>
    <scope>NUCLEOTIDE SEQUENCE [LARGE SCALE MRNA]</scope>
</reference>
<reference evidence="7" key="5">
    <citation type="journal article" date="2007" name="Mol. Immunol.">
        <title>Drosophila C-type lectins enhance cellular encapsulation.</title>
        <authorList>
            <person name="Ao J."/>
            <person name="Ling E."/>
            <person name="Yu X.Q."/>
        </authorList>
    </citation>
    <scope>FUNCTION</scope>
</reference>
<dbReference type="EMBL" id="AB190812">
    <property type="protein sequence ID" value="BAD51434.1"/>
    <property type="molecule type" value="mRNA"/>
</dbReference>
<dbReference type="EMBL" id="AE014134">
    <property type="protein sequence ID" value="AAX52670.1"/>
    <property type="molecule type" value="Genomic_DNA"/>
</dbReference>
<dbReference type="EMBL" id="AE014134">
    <property type="protein sequence ID" value="ADV37096.1"/>
    <property type="molecule type" value="Genomic_DNA"/>
</dbReference>
<dbReference type="EMBL" id="BT032983">
    <property type="protein sequence ID" value="ACD99547.1"/>
    <property type="status" value="ALT_INIT"/>
    <property type="molecule type" value="mRNA"/>
</dbReference>
<dbReference type="RefSeq" id="NP_001014490.1">
    <property type="nucleotide sequence ID" value="NM_001014490.2"/>
</dbReference>
<dbReference type="RefSeq" id="NP_001188847.1">
    <property type="nucleotide sequence ID" value="NM_001201918.1"/>
</dbReference>
<dbReference type="SMR" id="Q59DY5"/>
<dbReference type="FunCoup" id="Q59DY5">
    <property type="interactions" value="6"/>
</dbReference>
<dbReference type="IntAct" id="Q59DY5">
    <property type="interactions" value="1"/>
</dbReference>
<dbReference type="GlyCosmos" id="Q59DY5">
    <property type="glycosylation" value="2 sites, No reported glycans"/>
</dbReference>
<dbReference type="GlyGen" id="Q59DY5">
    <property type="glycosylation" value="2 sites"/>
</dbReference>
<dbReference type="PaxDb" id="7227-FBpp0099538"/>
<dbReference type="DNASU" id="3346221"/>
<dbReference type="EnsemblMetazoa" id="FBtr0091499">
    <property type="protein sequence ID" value="FBpp0099538"/>
    <property type="gene ID" value="FBgn0053533"/>
</dbReference>
<dbReference type="EnsemblMetazoa" id="FBtr0302362">
    <property type="protein sequence ID" value="FBpp0291558"/>
    <property type="gene ID" value="FBgn0053533"/>
</dbReference>
<dbReference type="GeneID" id="3346221"/>
<dbReference type="KEGG" id="dme:Dmel_CG33533"/>
<dbReference type="UCSC" id="CG33533-RA">
    <property type="organism name" value="d. melanogaster"/>
</dbReference>
<dbReference type="AGR" id="FB:FBgn0053533"/>
<dbReference type="CTD" id="3346221"/>
<dbReference type="FlyBase" id="FBgn0053533">
    <property type="gene designation" value="lectin-37Db"/>
</dbReference>
<dbReference type="VEuPathDB" id="VectorBase:FBgn0053533"/>
<dbReference type="eggNOG" id="KOG4297">
    <property type="taxonomic scope" value="Eukaryota"/>
</dbReference>
<dbReference type="GeneTree" id="ENSGT00940000172481"/>
<dbReference type="HOGENOM" id="CLU_049894_10_0_1"/>
<dbReference type="InParanoid" id="Q59DY5"/>
<dbReference type="OMA" id="CETSSPN"/>
<dbReference type="OrthoDB" id="538816at2759"/>
<dbReference type="PhylomeDB" id="Q59DY5"/>
<dbReference type="Reactome" id="R-DME-1236978">
    <property type="pathway name" value="Cross-presentation of soluble exogenous antigens (endosomes)"/>
</dbReference>
<dbReference type="Reactome" id="R-DME-446203">
    <property type="pathway name" value="Asparagine N-linked glycosylation"/>
</dbReference>
<dbReference type="Reactome" id="R-DME-5621480">
    <property type="pathway name" value="Dectin-2 family"/>
</dbReference>
<dbReference type="Reactome" id="R-DME-6798695">
    <property type="pathway name" value="Neutrophil degranulation"/>
</dbReference>
<dbReference type="BioGRID-ORCS" id="3346221">
    <property type="hits" value="0 hits in 3 CRISPR screens"/>
</dbReference>
<dbReference type="GenomeRNAi" id="3346221"/>
<dbReference type="PRO" id="PR:Q59DY5"/>
<dbReference type="Proteomes" id="UP000000803">
    <property type="component" value="Chromosome 2L"/>
</dbReference>
<dbReference type="Bgee" id="FBgn0053533">
    <property type="expression patterns" value="Expressed in midgut large flat cell (Drosophila) in digestive tract and 41 other cell types or tissues"/>
</dbReference>
<dbReference type="ExpressionAtlas" id="Q59DY5">
    <property type="expression patterns" value="baseline and differential"/>
</dbReference>
<dbReference type="GO" id="GO:0009897">
    <property type="term" value="C:external side of plasma membrane"/>
    <property type="evidence" value="ECO:0000318"/>
    <property type="project" value="GO_Central"/>
</dbReference>
<dbReference type="GO" id="GO:0005576">
    <property type="term" value="C:extracellular region"/>
    <property type="evidence" value="ECO:0000314"/>
    <property type="project" value="FlyBase"/>
</dbReference>
<dbReference type="GO" id="GO:0030246">
    <property type="term" value="F:carbohydrate binding"/>
    <property type="evidence" value="ECO:0000318"/>
    <property type="project" value="GO_Central"/>
</dbReference>
<dbReference type="GO" id="GO:0005534">
    <property type="term" value="F:galactose binding"/>
    <property type="evidence" value="ECO:0000314"/>
    <property type="project" value="FlyBase"/>
</dbReference>
<dbReference type="GO" id="GO:0046872">
    <property type="term" value="F:metal ion binding"/>
    <property type="evidence" value="ECO:0007669"/>
    <property type="project" value="UniProtKB-KW"/>
</dbReference>
<dbReference type="GO" id="GO:0038187">
    <property type="term" value="F:pattern recognition receptor activity"/>
    <property type="evidence" value="ECO:0000318"/>
    <property type="project" value="GO_Central"/>
</dbReference>
<dbReference type="GO" id="GO:0016339">
    <property type="term" value="P:calcium-dependent cell-cell adhesion via plasma membrane cell adhesion molecules"/>
    <property type="evidence" value="ECO:0000314"/>
    <property type="project" value="FlyBase"/>
</dbReference>
<dbReference type="GO" id="GO:0035010">
    <property type="term" value="P:encapsulation of foreign target"/>
    <property type="evidence" value="ECO:0000314"/>
    <property type="project" value="FlyBase"/>
</dbReference>
<dbReference type="GO" id="GO:0006955">
    <property type="term" value="P:immune response"/>
    <property type="evidence" value="ECO:0000318"/>
    <property type="project" value="GO_Central"/>
</dbReference>
<dbReference type="GO" id="GO:0035006">
    <property type="term" value="P:melanization defense response"/>
    <property type="evidence" value="ECO:0000314"/>
    <property type="project" value="FlyBase"/>
</dbReference>
<dbReference type="CDD" id="cd00037">
    <property type="entry name" value="CLECT"/>
    <property type="match status" value="1"/>
</dbReference>
<dbReference type="FunFam" id="3.10.100.10:FF:000156">
    <property type="entry name" value="GD24202"/>
    <property type="match status" value="1"/>
</dbReference>
<dbReference type="Gene3D" id="3.10.100.10">
    <property type="entry name" value="Mannose-Binding Protein A, subunit A"/>
    <property type="match status" value="1"/>
</dbReference>
<dbReference type="InterPro" id="IPR001304">
    <property type="entry name" value="C-type_lectin-like"/>
</dbReference>
<dbReference type="InterPro" id="IPR016186">
    <property type="entry name" value="C-type_lectin-like/link_sf"/>
</dbReference>
<dbReference type="InterPro" id="IPR050111">
    <property type="entry name" value="C-type_lectin/snaclec_domain"/>
</dbReference>
<dbReference type="InterPro" id="IPR016187">
    <property type="entry name" value="CTDL_fold"/>
</dbReference>
<dbReference type="PANTHER" id="PTHR22803">
    <property type="entry name" value="MANNOSE, PHOSPHOLIPASE, LECTIN RECEPTOR RELATED"/>
    <property type="match status" value="1"/>
</dbReference>
<dbReference type="Pfam" id="PF00059">
    <property type="entry name" value="Lectin_C"/>
    <property type="match status" value="1"/>
</dbReference>
<dbReference type="SMART" id="SM00034">
    <property type="entry name" value="CLECT"/>
    <property type="match status" value="1"/>
</dbReference>
<dbReference type="SUPFAM" id="SSF56436">
    <property type="entry name" value="C-type lectin-like"/>
    <property type="match status" value="1"/>
</dbReference>
<dbReference type="PROSITE" id="PS50041">
    <property type="entry name" value="C_TYPE_LECTIN_2"/>
    <property type="match status" value="1"/>
</dbReference>
<protein>
    <recommendedName>
        <fullName evidence="7">C-type lectin 37Db</fullName>
    </recommendedName>
</protein>